<name>HSE1_PYRO7</name>
<protein>
    <recommendedName>
        <fullName>Class E vacuolar protein-sorting machinery protein HSE1</fullName>
    </recommendedName>
</protein>
<comment type="function">
    <text evidence="1">Component of the ESCRT-0 complex which is the sorting receptor for ubiquitinated cargo proteins at the multivesicular body (MVB).</text>
</comment>
<comment type="subunit">
    <text evidence="1">Component of the ESCRT-0 complex composed of HSE1 and VPS27.</text>
</comment>
<comment type="subcellular location">
    <subcellularLocation>
        <location evidence="1">Endosome membrane</location>
        <topology evidence="1">Peripheral membrane protein</topology>
        <orientation evidence="1">Cytoplasmic side</orientation>
    </subcellularLocation>
</comment>
<comment type="similarity">
    <text evidence="6">Belongs to the STAM family.</text>
</comment>
<accession>A4RF61</accession>
<accession>G4NC25</accession>
<keyword id="KW-0967">Endosome</keyword>
<keyword id="KW-0472">Membrane</keyword>
<keyword id="KW-0653">Protein transport</keyword>
<keyword id="KW-1185">Reference proteome</keyword>
<keyword id="KW-0728">SH3 domain</keyword>
<keyword id="KW-0813">Transport</keyword>
<feature type="chain" id="PRO_0000292498" description="Class E vacuolar protein-sorting machinery protein HSE1">
    <location>
        <begin position="1"/>
        <end position="718"/>
    </location>
</feature>
<feature type="domain" description="VHS" evidence="4">
    <location>
        <begin position="17"/>
        <end position="146"/>
    </location>
</feature>
<feature type="domain" description="UIM" evidence="3">
    <location>
        <begin position="163"/>
        <end position="182"/>
    </location>
</feature>
<feature type="domain" description="SH3" evidence="2">
    <location>
        <begin position="234"/>
        <end position="293"/>
    </location>
</feature>
<feature type="region of interest" description="Disordered" evidence="5">
    <location>
        <begin position="142"/>
        <end position="164"/>
    </location>
</feature>
<feature type="region of interest" description="Disordered" evidence="5">
    <location>
        <begin position="178"/>
        <end position="230"/>
    </location>
</feature>
<feature type="region of interest" description="Disordered" evidence="5">
    <location>
        <begin position="384"/>
        <end position="718"/>
    </location>
</feature>
<feature type="compositionally biased region" description="Low complexity" evidence="5">
    <location>
        <begin position="187"/>
        <end position="202"/>
    </location>
</feature>
<feature type="compositionally biased region" description="Low complexity" evidence="5">
    <location>
        <begin position="210"/>
        <end position="221"/>
    </location>
</feature>
<feature type="compositionally biased region" description="Pro residues" evidence="5">
    <location>
        <begin position="408"/>
        <end position="438"/>
    </location>
</feature>
<feature type="compositionally biased region" description="Low complexity" evidence="5">
    <location>
        <begin position="509"/>
        <end position="520"/>
    </location>
</feature>
<feature type="compositionally biased region" description="Polar residues" evidence="5">
    <location>
        <begin position="521"/>
        <end position="534"/>
    </location>
</feature>
<feature type="compositionally biased region" description="Low complexity" evidence="5">
    <location>
        <begin position="581"/>
        <end position="604"/>
    </location>
</feature>
<feature type="compositionally biased region" description="Pro residues" evidence="5">
    <location>
        <begin position="624"/>
        <end position="637"/>
    </location>
</feature>
<feature type="compositionally biased region" description="Low complexity" evidence="5">
    <location>
        <begin position="665"/>
        <end position="680"/>
    </location>
</feature>
<feature type="compositionally biased region" description="Low complexity" evidence="5">
    <location>
        <begin position="689"/>
        <end position="706"/>
    </location>
</feature>
<evidence type="ECO:0000250" key="1"/>
<evidence type="ECO:0000255" key="2">
    <source>
        <dbReference type="PROSITE-ProRule" id="PRU00192"/>
    </source>
</evidence>
<evidence type="ECO:0000255" key="3">
    <source>
        <dbReference type="PROSITE-ProRule" id="PRU00213"/>
    </source>
</evidence>
<evidence type="ECO:0000255" key="4">
    <source>
        <dbReference type="PROSITE-ProRule" id="PRU00218"/>
    </source>
</evidence>
<evidence type="ECO:0000256" key="5">
    <source>
        <dbReference type="SAM" id="MobiDB-lite"/>
    </source>
</evidence>
<evidence type="ECO:0000305" key="6"/>
<sequence>MFRAQATTPYDTAIAKATDENLTSEDWGAIMEVCDRVAGDDNGAKEAVQALIRRLAHRNANVQLYTLEVANALSQNCGKPMHRELASRAFTEALLKLANERNTHNQVKAKILEGTKEWSDMFKDDADLGIMYDAYYRLKQTNPQLQPPSAPQKNSLTDVDRQKEEEELQIALKLSLQEEERKKQQTPAGPSGAAGPSSSSAPDQAGTPSGQGADAGAGAAAVPLQPTGTGTTAATVSRVRALYDFVPSEDGELEFKKGDVIAVLESVYKDWWRGSLKGKTGIFPLNYVEKLADPTPDELQREAQMEAEVFSEIKNVEKLLTLLSTSSKDEDSEEIAKLYQQTSAIRPKLIKLIEKYSQKKDDFTQLNEKFIKARRDYEALLETSMSHPPQPSYHQYAVRPQGYGGSPTPYPTQGPPQQDPQRFYPPGPHPDQYPPSSPSPHLQRPGGTPGPGAQAPFYVAGAEVPSHGGPHPNQNFPPRDPGQRIPSAGKQPARLQTQQASSSPPPSAPYAAYSQPPAQQGSYGNPQELSTSAYDSPVASHPHPNPLGSNAPFAPATYPAEERYGTPSAAPAPLNPGGGQQQPYQYNSYQNQTPPQPANTQPPQGGMYSGQGYNDSSDAVGNVPPQPTSAAPPPPVPGSQRVHSPVYGGPPGAADSRFSLPSRMGPGAPSAPLGGPSSPGEQPQYKAYVPPGSSGPSAPSAPSVPADYYRQPGGTANY</sequence>
<reference key="1">
    <citation type="journal article" date="2005" name="Nature">
        <title>The genome sequence of the rice blast fungus Magnaporthe grisea.</title>
        <authorList>
            <person name="Dean R.A."/>
            <person name="Talbot N.J."/>
            <person name="Ebbole D.J."/>
            <person name="Farman M.L."/>
            <person name="Mitchell T.K."/>
            <person name="Orbach M.J."/>
            <person name="Thon M.R."/>
            <person name="Kulkarni R."/>
            <person name="Xu J.-R."/>
            <person name="Pan H."/>
            <person name="Read N.D."/>
            <person name="Lee Y.-H."/>
            <person name="Carbone I."/>
            <person name="Brown D."/>
            <person name="Oh Y.Y."/>
            <person name="Donofrio N."/>
            <person name="Jeong J.S."/>
            <person name="Soanes D.M."/>
            <person name="Djonovic S."/>
            <person name="Kolomiets E."/>
            <person name="Rehmeyer C."/>
            <person name="Li W."/>
            <person name="Harding M."/>
            <person name="Kim S."/>
            <person name="Lebrun M.-H."/>
            <person name="Bohnert H."/>
            <person name="Coughlan S."/>
            <person name="Butler J."/>
            <person name="Calvo S.E."/>
            <person name="Ma L.-J."/>
            <person name="Nicol R."/>
            <person name="Purcell S."/>
            <person name="Nusbaum C."/>
            <person name="Galagan J.E."/>
            <person name="Birren B.W."/>
        </authorList>
    </citation>
    <scope>NUCLEOTIDE SEQUENCE [LARGE SCALE GENOMIC DNA]</scope>
    <source>
        <strain>70-15 / ATCC MYA-4617 / FGSC 8958</strain>
    </source>
</reference>
<gene>
    <name type="primary">HSE1</name>
    <name type="ORF">MGG_00455</name>
</gene>
<dbReference type="EMBL" id="CM001235">
    <property type="protein sequence ID" value="EHA49028.1"/>
    <property type="molecule type" value="Genomic_DNA"/>
</dbReference>
<dbReference type="RefSeq" id="XP_003718612.1">
    <property type="nucleotide sequence ID" value="XM_003718564.1"/>
</dbReference>
<dbReference type="SMR" id="A4RF61"/>
<dbReference type="FunCoup" id="A4RF61">
    <property type="interactions" value="345"/>
</dbReference>
<dbReference type="STRING" id="242507.A4RF61"/>
<dbReference type="EnsemblFungi" id="MGG_00455T0">
    <property type="protein sequence ID" value="MGG_00455T0"/>
    <property type="gene ID" value="MGG_00455"/>
</dbReference>
<dbReference type="GeneID" id="2674892"/>
<dbReference type="KEGG" id="mgr:MGG_00455"/>
<dbReference type="VEuPathDB" id="FungiDB:MGG_00455"/>
<dbReference type="eggNOG" id="KOG2199">
    <property type="taxonomic scope" value="Eukaryota"/>
</dbReference>
<dbReference type="HOGENOM" id="CLU_010104_1_1_1"/>
<dbReference type="InParanoid" id="A4RF61"/>
<dbReference type="OMA" id="QVYRDWW"/>
<dbReference type="OrthoDB" id="10255964at2759"/>
<dbReference type="Proteomes" id="UP000009058">
    <property type="component" value="Chromosome 5"/>
</dbReference>
<dbReference type="GO" id="GO:0010008">
    <property type="term" value="C:endosome membrane"/>
    <property type="evidence" value="ECO:0007669"/>
    <property type="project" value="UniProtKB-SubCell"/>
</dbReference>
<dbReference type="GO" id="GO:0033565">
    <property type="term" value="C:ESCRT-0 complex"/>
    <property type="evidence" value="ECO:0007669"/>
    <property type="project" value="TreeGrafter"/>
</dbReference>
<dbReference type="GO" id="GO:0035091">
    <property type="term" value="F:phosphatidylinositol binding"/>
    <property type="evidence" value="ECO:0007669"/>
    <property type="project" value="InterPro"/>
</dbReference>
<dbReference type="GO" id="GO:0043130">
    <property type="term" value="F:ubiquitin binding"/>
    <property type="evidence" value="ECO:0007669"/>
    <property type="project" value="InterPro"/>
</dbReference>
<dbReference type="GO" id="GO:0043328">
    <property type="term" value="P:protein transport to vacuole involved in ubiquitin-dependent protein catabolic process via the multivesicular body sorting pathway"/>
    <property type="evidence" value="ECO:0007669"/>
    <property type="project" value="TreeGrafter"/>
</dbReference>
<dbReference type="CDD" id="cd21386">
    <property type="entry name" value="GAT_Hse1"/>
    <property type="match status" value="1"/>
</dbReference>
<dbReference type="CDD" id="cd11805">
    <property type="entry name" value="SH3_GRB2_like_C"/>
    <property type="match status" value="1"/>
</dbReference>
<dbReference type="CDD" id="cd16978">
    <property type="entry name" value="VHS_HSE1"/>
    <property type="match status" value="1"/>
</dbReference>
<dbReference type="FunFam" id="2.30.30.40:FF:000072">
    <property type="entry name" value="Unconventional Myosin IB"/>
    <property type="match status" value="1"/>
</dbReference>
<dbReference type="Gene3D" id="1.20.5.1940">
    <property type="match status" value="1"/>
</dbReference>
<dbReference type="Gene3D" id="1.25.40.90">
    <property type="match status" value="1"/>
</dbReference>
<dbReference type="Gene3D" id="2.30.30.40">
    <property type="entry name" value="SH3 Domains"/>
    <property type="match status" value="1"/>
</dbReference>
<dbReference type="InterPro" id="IPR008942">
    <property type="entry name" value="ENTH_VHS"/>
</dbReference>
<dbReference type="InterPro" id="IPR004152">
    <property type="entry name" value="GAT_dom"/>
</dbReference>
<dbReference type="InterPro" id="IPR036028">
    <property type="entry name" value="SH3-like_dom_sf"/>
</dbReference>
<dbReference type="InterPro" id="IPR001452">
    <property type="entry name" value="SH3_domain"/>
</dbReference>
<dbReference type="InterPro" id="IPR050670">
    <property type="entry name" value="STAM"/>
</dbReference>
<dbReference type="InterPro" id="IPR003903">
    <property type="entry name" value="UIM_dom"/>
</dbReference>
<dbReference type="InterPro" id="IPR002014">
    <property type="entry name" value="VHS_dom"/>
</dbReference>
<dbReference type="PANTHER" id="PTHR45929">
    <property type="entry name" value="JAK PATHWAY SIGNAL TRANSDUCTION ADAPTOR MOLECULE"/>
    <property type="match status" value="1"/>
</dbReference>
<dbReference type="PANTHER" id="PTHR45929:SF3">
    <property type="entry name" value="JAK PATHWAY SIGNAL TRANSDUCTION ADAPTOR MOLECULE"/>
    <property type="match status" value="1"/>
</dbReference>
<dbReference type="Pfam" id="PF03127">
    <property type="entry name" value="GAT"/>
    <property type="match status" value="1"/>
</dbReference>
<dbReference type="Pfam" id="PF00018">
    <property type="entry name" value="SH3_1"/>
    <property type="match status" value="1"/>
</dbReference>
<dbReference type="Pfam" id="PF00790">
    <property type="entry name" value="VHS"/>
    <property type="match status" value="1"/>
</dbReference>
<dbReference type="PRINTS" id="PR00452">
    <property type="entry name" value="SH3DOMAIN"/>
</dbReference>
<dbReference type="PRINTS" id="PR01887">
    <property type="entry name" value="SPECTRNALPHA"/>
</dbReference>
<dbReference type="SMART" id="SM00326">
    <property type="entry name" value="SH3"/>
    <property type="match status" value="1"/>
</dbReference>
<dbReference type="SMART" id="SM00288">
    <property type="entry name" value="VHS"/>
    <property type="match status" value="1"/>
</dbReference>
<dbReference type="SUPFAM" id="SSF48464">
    <property type="entry name" value="ENTH/VHS domain"/>
    <property type="match status" value="1"/>
</dbReference>
<dbReference type="SUPFAM" id="SSF50044">
    <property type="entry name" value="SH3-domain"/>
    <property type="match status" value="1"/>
</dbReference>
<dbReference type="PROSITE" id="PS50002">
    <property type="entry name" value="SH3"/>
    <property type="match status" value="1"/>
</dbReference>
<dbReference type="PROSITE" id="PS50330">
    <property type="entry name" value="UIM"/>
    <property type="match status" value="1"/>
</dbReference>
<dbReference type="PROSITE" id="PS50179">
    <property type="entry name" value="VHS"/>
    <property type="match status" value="1"/>
</dbReference>
<proteinExistence type="inferred from homology"/>
<organism>
    <name type="scientific">Pyricularia oryzae (strain 70-15 / ATCC MYA-4617 / FGSC 8958)</name>
    <name type="common">Rice blast fungus</name>
    <name type="synonym">Magnaporthe oryzae</name>
    <dbReference type="NCBI Taxonomy" id="242507"/>
    <lineage>
        <taxon>Eukaryota</taxon>
        <taxon>Fungi</taxon>
        <taxon>Dikarya</taxon>
        <taxon>Ascomycota</taxon>
        <taxon>Pezizomycotina</taxon>
        <taxon>Sordariomycetes</taxon>
        <taxon>Sordariomycetidae</taxon>
        <taxon>Magnaporthales</taxon>
        <taxon>Pyriculariaceae</taxon>
        <taxon>Pyricularia</taxon>
    </lineage>
</organism>